<reference key="1">
    <citation type="submission" date="2009-01" db="EMBL/GenBank/DDBJ databases">
        <title>Complete sequence of Geobacter sp. FRC-32.</title>
        <authorList>
            <consortium name="US DOE Joint Genome Institute"/>
            <person name="Lucas S."/>
            <person name="Copeland A."/>
            <person name="Lapidus A."/>
            <person name="Glavina del Rio T."/>
            <person name="Dalin E."/>
            <person name="Tice H."/>
            <person name="Bruce D."/>
            <person name="Goodwin L."/>
            <person name="Pitluck S."/>
            <person name="Saunders E."/>
            <person name="Brettin T."/>
            <person name="Detter J.C."/>
            <person name="Han C."/>
            <person name="Larimer F."/>
            <person name="Land M."/>
            <person name="Hauser L."/>
            <person name="Kyrpides N."/>
            <person name="Ovchinnikova G."/>
            <person name="Kostka J."/>
            <person name="Richardson P."/>
        </authorList>
    </citation>
    <scope>NUCLEOTIDE SEQUENCE [LARGE SCALE GENOMIC DNA]</scope>
    <source>
        <strain>DSM 22248 / JCM 15807 / FRC-32</strain>
    </source>
</reference>
<organism>
    <name type="scientific">Geotalea daltonii (strain DSM 22248 / JCM 15807 / FRC-32)</name>
    <name type="common">Geobacter daltonii</name>
    <dbReference type="NCBI Taxonomy" id="316067"/>
    <lineage>
        <taxon>Bacteria</taxon>
        <taxon>Pseudomonadati</taxon>
        <taxon>Thermodesulfobacteriota</taxon>
        <taxon>Desulfuromonadia</taxon>
        <taxon>Geobacterales</taxon>
        <taxon>Geobacteraceae</taxon>
        <taxon>Geotalea</taxon>
    </lineage>
</organism>
<gene>
    <name type="ordered locus">Geob_1113</name>
</gene>
<dbReference type="EMBL" id="CP001390">
    <property type="protein sequence ID" value="ACM19473.1"/>
    <property type="molecule type" value="Genomic_DNA"/>
</dbReference>
<dbReference type="RefSeq" id="WP_012646202.1">
    <property type="nucleotide sequence ID" value="NC_011979.1"/>
</dbReference>
<dbReference type="SMR" id="B9M363"/>
<dbReference type="STRING" id="316067.Geob_1113"/>
<dbReference type="KEGG" id="geo:Geob_1113"/>
<dbReference type="eggNOG" id="COG1058">
    <property type="taxonomic scope" value="Bacteria"/>
</dbReference>
<dbReference type="eggNOG" id="COG1546">
    <property type="taxonomic scope" value="Bacteria"/>
</dbReference>
<dbReference type="HOGENOM" id="CLU_030805_9_2_7"/>
<dbReference type="OrthoDB" id="9801454at2"/>
<dbReference type="Proteomes" id="UP000007721">
    <property type="component" value="Chromosome"/>
</dbReference>
<dbReference type="CDD" id="cd00885">
    <property type="entry name" value="cinA"/>
    <property type="match status" value="1"/>
</dbReference>
<dbReference type="Gene3D" id="3.90.950.20">
    <property type="entry name" value="CinA-like"/>
    <property type="match status" value="1"/>
</dbReference>
<dbReference type="Gene3D" id="3.40.980.10">
    <property type="entry name" value="MoaB/Mog-like domain"/>
    <property type="match status" value="1"/>
</dbReference>
<dbReference type="HAMAP" id="MF_00226_B">
    <property type="entry name" value="CinA_B"/>
    <property type="match status" value="1"/>
</dbReference>
<dbReference type="InterPro" id="IPR050101">
    <property type="entry name" value="CinA"/>
</dbReference>
<dbReference type="InterPro" id="IPR036653">
    <property type="entry name" value="CinA-like_C"/>
</dbReference>
<dbReference type="InterPro" id="IPR008136">
    <property type="entry name" value="CinA_C"/>
</dbReference>
<dbReference type="InterPro" id="IPR041424">
    <property type="entry name" value="CinA_KH"/>
</dbReference>
<dbReference type="InterPro" id="IPR008135">
    <property type="entry name" value="Competence-induced_CinA"/>
</dbReference>
<dbReference type="InterPro" id="IPR036425">
    <property type="entry name" value="MoaB/Mog-like_dom_sf"/>
</dbReference>
<dbReference type="InterPro" id="IPR001453">
    <property type="entry name" value="MoaB/Mog_dom"/>
</dbReference>
<dbReference type="NCBIfam" id="TIGR00200">
    <property type="entry name" value="cinA_nterm"/>
    <property type="match status" value="1"/>
</dbReference>
<dbReference type="NCBIfam" id="TIGR00199">
    <property type="entry name" value="PncC_domain"/>
    <property type="match status" value="1"/>
</dbReference>
<dbReference type="NCBIfam" id="NF001813">
    <property type="entry name" value="PRK00549.1"/>
    <property type="match status" value="1"/>
</dbReference>
<dbReference type="PANTHER" id="PTHR13939">
    <property type="entry name" value="NICOTINAMIDE-NUCLEOTIDE AMIDOHYDROLASE PNCC"/>
    <property type="match status" value="1"/>
</dbReference>
<dbReference type="PANTHER" id="PTHR13939:SF0">
    <property type="entry name" value="NMN AMIDOHYDROLASE-LIKE PROTEIN YFAY"/>
    <property type="match status" value="1"/>
</dbReference>
<dbReference type="Pfam" id="PF02464">
    <property type="entry name" value="CinA"/>
    <property type="match status" value="1"/>
</dbReference>
<dbReference type="Pfam" id="PF18146">
    <property type="entry name" value="CinA_KH"/>
    <property type="match status" value="1"/>
</dbReference>
<dbReference type="Pfam" id="PF00994">
    <property type="entry name" value="MoCF_biosynth"/>
    <property type="match status" value="1"/>
</dbReference>
<dbReference type="PIRSF" id="PIRSF006728">
    <property type="entry name" value="CinA"/>
    <property type="match status" value="1"/>
</dbReference>
<dbReference type="SMART" id="SM00852">
    <property type="entry name" value="MoCF_biosynth"/>
    <property type="match status" value="1"/>
</dbReference>
<dbReference type="SUPFAM" id="SSF142433">
    <property type="entry name" value="CinA-like"/>
    <property type="match status" value="1"/>
</dbReference>
<dbReference type="SUPFAM" id="SSF53218">
    <property type="entry name" value="Molybdenum cofactor biosynthesis proteins"/>
    <property type="match status" value="1"/>
</dbReference>
<accession>B9M363</accession>
<protein>
    <recommendedName>
        <fullName evidence="1">CinA-like protein</fullName>
    </recommendedName>
</protein>
<feature type="chain" id="PRO_1000124984" description="CinA-like protein">
    <location>
        <begin position="1"/>
        <end position="413"/>
    </location>
</feature>
<evidence type="ECO:0000255" key="1">
    <source>
        <dbReference type="HAMAP-Rule" id="MF_00226"/>
    </source>
</evidence>
<comment type="similarity">
    <text evidence="1">Belongs to the CinA family.</text>
</comment>
<proteinExistence type="inferred from homology"/>
<sequence length="413" mass="43472">MRAAILSIGDELLLGEVVDTNASTIAARLYNLGVNLPLQMTVGDNIQDIVEACQLLAGKSDTVIVTGGLGPTVDDVTALAAAKLAGSPLEPNREALAHLKDFAERVAEKLHPANDKQSLMPASAKVIPNLVGTACGFSLVHDGCRFFFLPGVPGEMVSMLDETVLPALASSGRHKILRSKVFKVSGISEAELDAMLQGVTEGFAAASIAFCVNFPEIEVKIRVVADEKLTADKIIAIVGDKTRNILGSRVFAEDGETIDTVVAGLFKKTGATLSLAESCTGGLIAKRITDLSGSSAYFLEGLVTYSNRAKIDLLGVPAQLLEEKGAVSAEVAMAMARGAREKSGSDLALAVTGIAGPEGGSAEKPVGTVFMALAGQEQCRVRLFNFHGDREQVRLVTSFAALNWLRRELLARP</sequence>
<keyword id="KW-1185">Reference proteome</keyword>
<name>CINAL_GEODF</name>